<evidence type="ECO:0000250" key="1"/>
<evidence type="ECO:0000255" key="2"/>
<evidence type="ECO:0000305" key="3"/>
<sequence>IPPSRSSDCRCVPITLIVGFCIHPTGLSSVAKMIDEHPNLCQSDDECMKKGSGNFCARYPNNYIDYGWCFGSDSEALKGFL</sequence>
<accession>Q96474</accession>
<name>ALB1_LUPAN</name>
<comment type="function">
    <text evidence="1">A1b binds to basic 7S globulin (BG) and stimulates its phosphorylation activity.</text>
</comment>
<comment type="domain">
    <text evidence="1">The presence of a 'disulfide through disulfide knot' structurally defines this protein as a knottin.</text>
</comment>
<comment type="PTM">
    <text>Three disulfide bonds are probably present.</text>
</comment>
<comment type="PTM">
    <text>The C-terminal glycine may be removed from A1b.</text>
</comment>
<comment type="caution">
    <text evidence="3">While it is structurally defined as a knottin it lacks the conserved Cys residue in position 4.</text>
</comment>
<proteinExistence type="inferred from homology"/>
<protein>
    <recommendedName>
        <fullName>Albumin-1</fullName>
        <shortName>A1</shortName>
    </recommendedName>
    <component>
        <recommendedName>
            <fullName>Albumin-1 chain b</fullName>
            <shortName>A1b</shortName>
        </recommendedName>
        <alternativeName>
            <fullName>Leginsulin</fullName>
        </alternativeName>
    </component>
    <component>
        <recommendedName>
            <fullName>Albumin-1 chain a</fullName>
            <shortName>A1a</shortName>
        </recommendedName>
    </component>
</protein>
<keyword id="KW-1015">Disulfide bond</keyword>
<keyword id="KW-0960">Knottin</keyword>
<keyword id="KW-0708">Seed storage protein</keyword>
<keyword id="KW-0758">Storage protein</keyword>
<keyword id="KW-0800">Toxin</keyword>
<gene>
    <name type="primary">LEG1</name>
</gene>
<dbReference type="EMBL" id="U74383">
    <property type="protein sequence ID" value="AAC49786.1"/>
    <property type="molecule type" value="Genomic_DNA"/>
</dbReference>
<dbReference type="SMR" id="Q96474"/>
<dbReference type="GO" id="GO:0045735">
    <property type="term" value="F:nutrient reservoir activity"/>
    <property type="evidence" value="ECO:0007669"/>
    <property type="project" value="UniProtKB-KW"/>
</dbReference>
<dbReference type="GO" id="GO:0090729">
    <property type="term" value="F:toxin activity"/>
    <property type="evidence" value="ECO:0007669"/>
    <property type="project" value="UniProtKB-KW"/>
</dbReference>
<dbReference type="InterPro" id="IPR012512">
    <property type="entry name" value="Albumin_I"/>
</dbReference>
<dbReference type="InterPro" id="IPR032000">
    <property type="entry name" value="Albumin_I_a"/>
</dbReference>
<dbReference type="Pfam" id="PF08027">
    <property type="entry name" value="Albumin_I"/>
    <property type="match status" value="1"/>
</dbReference>
<dbReference type="Pfam" id="PF16720">
    <property type="entry name" value="Albumin_I_a"/>
    <property type="match status" value="1"/>
</dbReference>
<dbReference type="SUPFAM" id="SSF57059">
    <property type="entry name" value="omega toxin-like"/>
    <property type="match status" value="1"/>
</dbReference>
<organism>
    <name type="scientific">Lupinus angustifolius</name>
    <name type="common">Narrow-leaved blue lupine</name>
    <dbReference type="NCBI Taxonomy" id="3871"/>
    <lineage>
        <taxon>Eukaryota</taxon>
        <taxon>Viridiplantae</taxon>
        <taxon>Streptophyta</taxon>
        <taxon>Embryophyta</taxon>
        <taxon>Tracheophyta</taxon>
        <taxon>Spermatophyta</taxon>
        <taxon>Magnoliopsida</taxon>
        <taxon>eudicotyledons</taxon>
        <taxon>Gunneridae</taxon>
        <taxon>Pentapetalae</taxon>
        <taxon>rosids</taxon>
        <taxon>fabids</taxon>
        <taxon>Fabales</taxon>
        <taxon>Fabaceae</taxon>
        <taxon>Papilionoideae</taxon>
        <taxon>50 kb inversion clade</taxon>
        <taxon>genistoids sensu lato</taxon>
        <taxon>core genistoids</taxon>
        <taxon>Genisteae</taxon>
        <taxon>Lupinus</taxon>
    </lineage>
</organism>
<reference key="1">
    <citation type="journal article" date="1997" name="Plant Mol. Biol.">
        <title>Transcription of genes for conglutin gamma and a leginsulin-like protein in narrow-leafed lupin.</title>
        <authorList>
            <person name="Ilgoutz S.C."/>
            <person name="Knittel N."/>
            <person name="Lin J.M."/>
            <person name="Sterle S."/>
            <person name="Gayler K.R."/>
        </authorList>
    </citation>
    <scope>NUCLEOTIDE SEQUENCE [GENOMIC DNA]</scope>
    <source>
        <strain>cv. Unicrop</strain>
    </source>
</reference>
<feature type="chain" id="PRO_0000032243" description="Albumin-1 chain b" evidence="1">
    <location>
        <begin position="1" status="less than"/>
        <end position="26"/>
    </location>
</feature>
<feature type="propeptide" id="PRO_0000032244" evidence="2">
    <location>
        <begin position="27"/>
        <end position="34"/>
    </location>
</feature>
<feature type="chain" id="PRO_0000032245" description="Albumin-1 chain a" evidence="2">
    <location>
        <begin position="35"/>
        <end position="81" status="greater than"/>
    </location>
</feature>
<feature type="non-terminal residue">
    <location>
        <position position="1"/>
    </location>
</feature>
<feature type="non-terminal residue">
    <location>
        <position position="81"/>
    </location>
</feature>